<comment type="function">
    <text evidence="1">Plays a critical role in the incorporation of lipoproteins in the outer membrane after they are released by the LolA protein.</text>
</comment>
<comment type="subunit">
    <text evidence="1">Monomer.</text>
</comment>
<comment type="subcellular location">
    <subcellularLocation>
        <location evidence="1">Cell outer membrane</location>
        <topology evidence="1">Lipid-anchor</topology>
    </subcellularLocation>
</comment>
<comment type="similarity">
    <text evidence="1">Belongs to the LolB family.</text>
</comment>
<proteinExistence type="inferred from homology"/>
<reference key="1">
    <citation type="journal article" date="2009" name="Proc. Natl. Acad. Sci. U.S.A.">
        <title>Hamiltonella defensa, genome evolution of protective bacterial endosymbiont from pathogenic ancestors.</title>
        <authorList>
            <person name="Degnan P.H."/>
            <person name="Yu Y."/>
            <person name="Sisneros N."/>
            <person name="Wing R.A."/>
            <person name="Moran N.A."/>
        </authorList>
    </citation>
    <scope>NUCLEOTIDE SEQUENCE [LARGE SCALE GENOMIC DNA]</scope>
    <source>
        <strain>5AT</strain>
    </source>
</reference>
<sequence>MLIFKICFYRLLPLSVLLLAACSALKAPESSSVLKNHIASDEWQEYQHQLKQIQQFQIQGSVAYFSDEKKAYARFFWQQYSPKNYHLLLLSPLGQTEFELKVTNGRVDMAKYKDQGEIKGDAEEILFKLTGIPIPLEHLSRWIVGASSDADEIILNRQSRLKTLIHHKKEQTWKVYYQAYNTKITPILPERLELYLISPNHQDQRMTLKINHWILK</sequence>
<gene>
    <name evidence="1" type="primary">lolB</name>
    <name type="ordered locus">HDEF_2119</name>
</gene>
<organism>
    <name type="scientific">Hamiltonella defensa subsp. Acyrthosiphon pisum (strain 5AT)</name>
    <dbReference type="NCBI Taxonomy" id="572265"/>
    <lineage>
        <taxon>Bacteria</taxon>
        <taxon>Pseudomonadati</taxon>
        <taxon>Pseudomonadota</taxon>
        <taxon>Gammaproteobacteria</taxon>
        <taxon>Enterobacterales</taxon>
        <taxon>Enterobacteriaceae</taxon>
        <taxon>aphid secondary symbionts</taxon>
        <taxon>Candidatus Hamiltonella</taxon>
    </lineage>
</organism>
<evidence type="ECO:0000255" key="1">
    <source>
        <dbReference type="HAMAP-Rule" id="MF_00233"/>
    </source>
</evidence>
<feature type="signal peptide" evidence="1">
    <location>
        <begin position="1"/>
        <end position="21"/>
    </location>
</feature>
<feature type="chain" id="PRO_1000204385" description="Outer-membrane lipoprotein LolB">
    <location>
        <begin position="22"/>
        <end position="216"/>
    </location>
</feature>
<feature type="lipid moiety-binding region" description="N-palmitoyl cysteine" evidence="1">
    <location>
        <position position="22"/>
    </location>
</feature>
<feature type="lipid moiety-binding region" description="S-diacylglycerol cysteine" evidence="1">
    <location>
        <position position="22"/>
    </location>
</feature>
<accession>C4K7Y9</accession>
<keyword id="KW-0998">Cell outer membrane</keyword>
<keyword id="KW-0143">Chaperone</keyword>
<keyword id="KW-0449">Lipoprotein</keyword>
<keyword id="KW-0472">Membrane</keyword>
<keyword id="KW-0564">Palmitate</keyword>
<keyword id="KW-0653">Protein transport</keyword>
<keyword id="KW-0732">Signal</keyword>
<keyword id="KW-0813">Transport</keyword>
<dbReference type="EMBL" id="CP001277">
    <property type="protein sequence ID" value="ACQ68682.1"/>
    <property type="molecule type" value="Genomic_DNA"/>
</dbReference>
<dbReference type="RefSeq" id="WP_015874427.1">
    <property type="nucleotide sequence ID" value="NC_012751.1"/>
</dbReference>
<dbReference type="SMR" id="C4K7Y9"/>
<dbReference type="STRING" id="572265.HDEF_2119"/>
<dbReference type="GeneID" id="66261657"/>
<dbReference type="KEGG" id="hde:HDEF_2119"/>
<dbReference type="eggNOG" id="COG3017">
    <property type="taxonomic scope" value="Bacteria"/>
</dbReference>
<dbReference type="HOGENOM" id="CLU_092816_1_1_6"/>
<dbReference type="Proteomes" id="UP000002334">
    <property type="component" value="Chromosome"/>
</dbReference>
<dbReference type="GO" id="GO:0009279">
    <property type="term" value="C:cell outer membrane"/>
    <property type="evidence" value="ECO:0007669"/>
    <property type="project" value="UniProtKB-SubCell"/>
</dbReference>
<dbReference type="GO" id="GO:0044874">
    <property type="term" value="P:lipoprotein localization to outer membrane"/>
    <property type="evidence" value="ECO:0007669"/>
    <property type="project" value="UniProtKB-UniRule"/>
</dbReference>
<dbReference type="GO" id="GO:0015031">
    <property type="term" value="P:protein transport"/>
    <property type="evidence" value="ECO:0007669"/>
    <property type="project" value="UniProtKB-KW"/>
</dbReference>
<dbReference type="CDD" id="cd16326">
    <property type="entry name" value="LolB"/>
    <property type="match status" value="1"/>
</dbReference>
<dbReference type="Gene3D" id="2.50.20.10">
    <property type="entry name" value="Lipoprotein localisation LolA/LolB/LppX"/>
    <property type="match status" value="1"/>
</dbReference>
<dbReference type="HAMAP" id="MF_00233">
    <property type="entry name" value="LolB"/>
    <property type="match status" value="1"/>
</dbReference>
<dbReference type="InterPro" id="IPR029046">
    <property type="entry name" value="LolA/LolB/LppX"/>
</dbReference>
<dbReference type="InterPro" id="IPR004565">
    <property type="entry name" value="OM_lipoprot_LolB"/>
</dbReference>
<dbReference type="NCBIfam" id="TIGR00548">
    <property type="entry name" value="lolB"/>
    <property type="match status" value="1"/>
</dbReference>
<dbReference type="Pfam" id="PF03550">
    <property type="entry name" value="LolB"/>
    <property type="match status" value="1"/>
</dbReference>
<dbReference type="SUPFAM" id="SSF89392">
    <property type="entry name" value="Prokaryotic lipoproteins and lipoprotein localization factors"/>
    <property type="match status" value="1"/>
</dbReference>
<dbReference type="PROSITE" id="PS51257">
    <property type="entry name" value="PROKAR_LIPOPROTEIN"/>
    <property type="match status" value="1"/>
</dbReference>
<name>LOLB_HAMD5</name>
<protein>
    <recommendedName>
        <fullName evidence="1">Outer-membrane lipoprotein LolB</fullName>
    </recommendedName>
</protein>